<sequence length="1139" mass="125483">MTIVYDVTGHKGGGGKQHTPQETPDSLHSLAKIRILLALGEGEFEGITSASELRQRVYLDGTPIQNADLSENFPGARVEFRPGTQHQDVIHGFSAVESEQSVGVKLENGTPWVRQINDTSLDAVRVRIGIPALYTSEDNGDLVGGRIDYKIVVYTDNADPREFTFAAVGKTMSLYERDHRIELPPNVNTGWRVEVHRITADSTSAKVVNDIQVQSITEIIDARLRYPLTALLFVEFDAKAFQNIPRVSIKCKGRKVLIPNNYDPINHTYSGDWDGTFKRAWSDNPAWHWYDICITERFGLGRRIKPQMLNRYALYQIAQRCDQLVSDGNGGREIRFKNDMYIQSQTDAWTVLKDLAAIFAGMTWWGNQMLNIVSDQPVAAVSHTITNASVIDGRFDYASGSQKTRYSTFAVAYGNPKNHYDDAIATGQRVELVRRHKINRLDITAIGCTRESEAQRRGHWALISNQLDQQVSFKVGMEGLFFIPGSVVAIADTNISGGFETRGGRLLSDPGTRTVLNTDSEITFRPGDKFLVRTDSGNVETREIASVNGNKVTLKTALDADPIPDQPFCVDGDDIQLQKFRITDLEYDDSTSTFSVRGIEYNDSKYDAVDNGARLDPGIFTQVPDGVMKGPESVTITPSQISSQGQLITNVDIVFPPVKDAVVYEIQWRRTSLQNMAVQWGNDWVNIPRTASNGAHIPNVFSGNYQARVRAIGMGEISSPWVSSAITPVEGRLGGLNAPIITNAISGLHQILWKWNHNNAATDISYTELEVRKTGETEWKFLTNVPYPGAEYAQTSLEFGIYQQLRARVADKIGNLSDWSAPFEGQVSDKVDEYMKGLDDEFLTSEDGKRFQEAIDTVPQGIYEAMLTDAQQLFNARAEYKGIYAEIKVAYNVAADAHKAVAQLETLIGTRLDDAEAAIHTLQTAQSTQEQAFAQYQQTVAAKFSEQEAAIQQVQTATADVAGALAEYKTQVAAQFGQQSAAIEQKMTSSFNHAGGSATYSLKAGVTYNGTYYDAGMQLSVVTEGDAVKSSIAFKADQFYIMHPSNGSLSSAFIVDGGAVYIDTARIKDATINFAQITDTLQSNNYDGDTRGWRLGKDGTFINLGTGNGGGMKQTNTQISVKDGNGVLRVQIGEITGSW</sequence>
<accession>A0A6M3YMB5</accession>
<comment type="function">
    <text evidence="1">Attaches the virion to the host receptor, inducing viral DNA ejection. During tail assembly, initiates distal tail tip assembly. During virus entry to host cell, binds strongly to host receptor in an irreversible attachment. The binding induces structural changes in the tail leading to viral DNA injection.</text>
</comment>
<comment type="subcellular location">
    <subcellularLocation>
        <location evidence="4">Virion</location>
    </subcellularLocation>
    <subcellularLocation>
        <location evidence="4">Host cytoplasm</location>
    </subcellularLocation>
</comment>
<comment type="PTM">
    <text evidence="2">Ubiquitinated by the Bil antiviral defense system when the Bil system is expressed in E.coli MG1655 and infected with this virus, or when this protein is expressed in a strain with the Bil system.</text>
</comment>
<comment type="similarity">
    <text evidence="4">Belongs to the Caudoviricetes tip attachment protein J family.</text>
</comment>
<name>TIPJ_BPSE4</name>
<proteinExistence type="evidence at protein level"/>
<evidence type="ECO:0000250" key="1">
    <source>
        <dbReference type="UniProtKB" id="P03749"/>
    </source>
</evidence>
<evidence type="ECO:0000269" key="2">
    <source>
    </source>
</evidence>
<evidence type="ECO:0000303" key="3">
    <source>
    </source>
</evidence>
<evidence type="ECO:0000305" key="4"/>
<evidence type="ECO:0000312" key="5">
    <source>
        <dbReference type="EMBL" id="QJI52569.1"/>
    </source>
</evidence>
<feature type="chain" id="PRO_0000462063" description="Tip attachment protein J">
    <location>
        <begin position="1"/>
        <end position="1139"/>
    </location>
</feature>
<protein>
    <recommendedName>
        <fullName evidence="1">Tip attachment protein J</fullName>
    </recommendedName>
    <alternativeName>
        <fullName evidence="3">Central tail fiber</fullName>
        <shortName evidence="3">CTF</shortName>
    </alternativeName>
    <alternativeName>
        <fullName evidence="4">gpJ protein</fullName>
    </alternativeName>
</protein>
<reference evidence="5" key="1">
    <citation type="journal article" date="2020" name="Cell">
        <title>Bacterial Retrons Function In Anti-Phage Defense.</title>
        <authorList>
            <person name="Millman A."/>
            <person name="Bernheim A."/>
            <person name="Stokar-Avihail A."/>
            <person name="Fedorenko T."/>
            <person name="Voichek M."/>
            <person name="Leavitt A."/>
            <person name="Oppenheimer-Shaanan Y."/>
            <person name="Sorek R."/>
        </authorList>
    </citation>
    <scope>NUCLEOTIDE SEQUENCE [LARGE SCALE GENOMIC DNA]</scope>
</reference>
<reference key="2">
    <citation type="journal article" date="2024" name="Nature">
        <title>Bacteria conjugate ubiquitin-like proteins to interfere with phage assembly.</title>
        <authorList>
            <person name="Hoer J."/>
            <person name="Wolf S.G."/>
            <person name="Sorek R."/>
        </authorList>
    </citation>
    <scope>IDENTIFICATION BY MASS SPECTROMETRY</scope>
    <scope>UBIQUITINYLATION</scope>
</reference>
<keyword id="KW-1035">Host cytoplasm</keyword>
<keyword id="KW-0832">Ubl conjugation</keyword>
<keyword id="KW-1188">Viral release from host cell</keyword>
<keyword id="KW-1245">Viral tail assembly</keyword>
<keyword id="KW-1227">Viral tail protein</keyword>
<keyword id="KW-0946">Virion</keyword>
<gene>
    <name evidence="1" type="primary">J</name>
</gene>
<organism>
    <name type="scientific">Escherichia phage SECphi4</name>
    <dbReference type="NCBI Taxonomy" id="2729542"/>
    <lineage>
        <taxon>Viruses</taxon>
        <taxon>Duplodnaviria</taxon>
        <taxon>Heunggongvirae</taxon>
        <taxon>Uroviricota</taxon>
        <taxon>Caudoviricetes</taxon>
        <taxon>Dhillonvirus</taxon>
    </lineage>
</organism>
<dbReference type="EMBL" id="MT331608">
    <property type="protein sequence ID" value="QJI52569.1"/>
    <property type="molecule type" value="Genomic_DNA"/>
</dbReference>
<dbReference type="Proteomes" id="UP000501105">
    <property type="component" value="Genome"/>
</dbReference>
<dbReference type="GO" id="GO:0030430">
    <property type="term" value="C:host cell cytoplasm"/>
    <property type="evidence" value="ECO:0007669"/>
    <property type="project" value="UniProtKB-SubCell"/>
</dbReference>
<dbReference type="InterPro" id="IPR015406">
    <property type="entry name" value="GpJ_CSF"/>
</dbReference>
<dbReference type="InterPro" id="IPR055385">
    <property type="entry name" value="GpJ_HDII-ins2"/>
</dbReference>
<dbReference type="InterPro" id="IPR032876">
    <property type="entry name" value="J_dom"/>
</dbReference>
<dbReference type="InterPro" id="IPR053171">
    <property type="entry name" value="Viral_Tip_Attach_Protein"/>
</dbReference>
<dbReference type="PANTHER" id="PTHR36251">
    <property type="entry name" value="FELS-1 PROPHAGE HOST SPECIFICITY PROTEIN-RELATED"/>
    <property type="match status" value="1"/>
</dbReference>
<dbReference type="PANTHER" id="PTHR36251:SF2">
    <property type="entry name" value="GIFSY-2 PROPHAGE HOST SPECIFICITY PROTEIN J, PHAGE LAMBDA"/>
    <property type="match status" value="1"/>
</dbReference>
<dbReference type="Pfam" id="PF24801">
    <property type="entry name" value="FNIII-A_GpJ"/>
    <property type="match status" value="1"/>
</dbReference>
<dbReference type="Pfam" id="PF13550">
    <property type="entry name" value="Phage-tail_3"/>
    <property type="match status" value="1"/>
</dbReference>
<dbReference type="Pfam" id="PF09327">
    <property type="entry name" value="Phage_Tail_Tip"/>
    <property type="match status" value="1"/>
</dbReference>